<dbReference type="EMBL" id="U94848">
    <property type="protein sequence ID" value="AAB96453.1"/>
    <property type="molecule type" value="Genomic_DNA"/>
</dbReference>
<dbReference type="EMBL" id="AY603355">
    <property type="protein sequence ID" value="AAT10508.1"/>
    <property type="molecule type" value="Genomic_DNA"/>
</dbReference>
<dbReference type="SMR" id="Q76ZR4"/>
<dbReference type="DNASU" id="3707516"/>
<dbReference type="KEGG" id="vg:3707516"/>
<dbReference type="Proteomes" id="UP000159908">
    <property type="component" value="Segment"/>
</dbReference>
<dbReference type="Proteomes" id="UP000172909">
    <property type="component" value="Segment"/>
</dbReference>
<dbReference type="GO" id="GO:0016020">
    <property type="term" value="C:membrane"/>
    <property type="evidence" value="ECO:0007669"/>
    <property type="project" value="UniProtKB-SubCell"/>
</dbReference>
<dbReference type="GO" id="GO:0046677">
    <property type="term" value="P:response to antibiotic"/>
    <property type="evidence" value="ECO:0007669"/>
    <property type="project" value="InterPro"/>
</dbReference>
<dbReference type="Gene3D" id="2.70.9.10">
    <property type="entry name" value="Adenovirus Type 2 Hexon, domain 4"/>
    <property type="match status" value="1"/>
</dbReference>
<dbReference type="InterPro" id="IPR005008">
    <property type="entry name" value="Poxvirus_Rif-R"/>
</dbReference>
<dbReference type="Pfam" id="PF03340">
    <property type="entry name" value="Pox_Rif"/>
    <property type="match status" value="1"/>
</dbReference>
<proteinExistence type="evidence at transcript level"/>
<organism>
    <name type="scientific">Vaccinia virus (strain Ankara)</name>
    <name type="common">VACV</name>
    <dbReference type="NCBI Taxonomy" id="126794"/>
    <lineage>
        <taxon>Viruses</taxon>
        <taxon>Varidnaviria</taxon>
        <taxon>Bamfordvirae</taxon>
        <taxon>Nucleocytoviricota</taxon>
        <taxon>Pokkesviricetes</taxon>
        <taxon>Chitovirales</taxon>
        <taxon>Poxviridae</taxon>
        <taxon>Chordopoxvirinae</taxon>
        <taxon>Orthopoxvirus</taxon>
        <taxon>Vaccinia virus</taxon>
    </lineage>
</organism>
<protein>
    <recommendedName>
        <fullName>Scaffold protein OPG125</fullName>
    </recommendedName>
    <alternativeName>
        <fullName>62 kDa protein</fullName>
    </alternativeName>
    <alternativeName>
        <fullName>Rifampicin resistance protein</fullName>
    </alternativeName>
</protein>
<keyword id="KW-0426">Late protein</keyword>
<keyword id="KW-0472">Membrane</keyword>
<gene>
    <name type="primary">OPG125</name>
    <name type="ordered locus">MVA110L</name>
    <name type="ordered locus">ACAM3000_MVA_110</name>
</gene>
<feature type="chain" id="PRO_0000099124" description="Scaffold protein OPG125">
    <location>
        <begin position="1"/>
        <end position="551"/>
    </location>
</feature>
<evidence type="ECO:0000250" key="1">
    <source>
        <dbReference type="UniProtKB" id="P68440"/>
    </source>
</evidence>
<evidence type="ECO:0000305" key="2"/>
<accession>Q76ZR4</accession>
<reference key="1">
    <citation type="journal article" date="1998" name="Virology">
        <title>The complete genomic sequence of the modified vaccinia Ankara strain: comparison with other orthopoxviruses.</title>
        <authorList>
            <person name="Antoine G."/>
            <person name="Scheiflinger F."/>
            <person name="Dorner F."/>
            <person name="Falkner F.G."/>
        </authorList>
    </citation>
    <scope>NUCLEOTIDE SEQUENCE [LARGE SCALE GENOMIC DNA]</scope>
</reference>
<reference key="2">
    <citation type="submission" date="2004-04" db="EMBL/GenBank/DDBJ databases">
        <authorList>
            <person name="Esposito J.J."/>
            <person name="Frace M."/>
            <person name="Sammons S.A."/>
            <person name="Olsen-Rasmussen M.S."/>
            <person name="Osborne J."/>
            <person name="Khristova M."/>
            <person name="Wohlhueter R.M."/>
        </authorList>
    </citation>
    <scope>NUCLEOTIDE SEQUENCE [LARGE SCALE GENOMIC DNA]</scope>
    <source>
        <strain>Isolate Acambis 3000</strain>
    </source>
</reference>
<organismHost>
    <name type="scientific">Homo sapiens</name>
    <name type="common">Human</name>
    <dbReference type="NCBI Taxonomy" id="9606"/>
</organismHost>
<comment type="function">
    <text evidence="1">Scaffold protein which forms a transitory spherical honeycomb lattice providing curvature and rigidity to the convex membrane of crescent and immature virions (IV). This association occurs concomitantly with viral membrane formation. Targeted by the drug rifampicin, which prevents the formation of this lattice, and hence virus morphogenesis. In the presence of rifampicin, irregularly shaped membranes that lack the honeycomb layer accumulate around areas of electron-dense viroplasm. This layer is lost from virions during maturation from IV to mature virion (MV), through the proteolysis of OPG158 N-terminus.</text>
</comment>
<comment type="subunit">
    <text evidence="1">Homotrimer. Self-assembles to form a layer. Interacts with OPG158 (via N-terminus); this interaction is necessary for OPG125 association with membranes.</text>
</comment>
<comment type="subcellular location">
    <subcellularLocation>
        <location evidence="1">Membrane</location>
        <topology evidence="1">Peripheral membrane protein</topology>
    </subcellularLocation>
    <text evidence="1">Associates transitorily with crescent and IV membranes.</text>
</comment>
<comment type="induction">
    <text>Expressed in the early phase of the viral replicative cycle.</text>
</comment>
<comment type="miscellaneous">
    <text>Displays structure similarities to capsid proteins.</text>
</comment>
<comment type="similarity">
    <text evidence="2">Belongs to the orthopoxvirus protein OPG125 family.</text>
</comment>
<sequence>MNNTIINSLIGGDDSIKRSNVFAVDSQIPTLYMPQYISLSGVMTNDGPDNQAIASFEIRDQYITALNHLVLSLELPEVKGMGRFGYVPYVGYKCINHVSISSCNGVIWEIEGEELYNNCINNTIALKHSGYSSELNDISIGLTPNDTIKEPSTVYVYIKTPFDVEDTFSSLKLSDSKITVTVTFNPVSDIVIRDSSFDFETFNKEFVYVPELSFIGYMVKNVQIKPSFIEKPRRVIGQINQPTATVTEVHAATSLSVYTKPYYGNTDNKFISYPGYSQDEKDYIDAYVSRLLDDLVIVSDGPPTGYPESAEIVEVPEDGIVSIQDADVYVKIDNVPDNMSVYLHTNLLMFGTRKNSFIYNISKKFSAITGTYSDATKRTIFAHISHSINIIDTSIPVSLWTSQRNVYNGDNRSAESKAKDLFINDPFIKGIDFKNKTDIISRLEVRFGNDVLYSENGPISRIYNELLTKSNNGTRTLTFNFTPKIFFRPTTITANVSRGKDKLSVRVVYSTMDVNHPIYYVQKQLVVVCNDLYKVSYDQGVSITKIMGDNN</sequence>
<name>PG125_VACCA</name>